<keyword id="KW-0067">ATP-binding</keyword>
<keyword id="KW-0143">Chaperone</keyword>
<keyword id="KW-0150">Chloroplast</keyword>
<keyword id="KW-0903">Direct protein sequencing</keyword>
<keyword id="KW-0547">Nucleotide-binding</keyword>
<keyword id="KW-0934">Plastid</keyword>
<keyword id="KW-0809">Transit peptide</keyword>
<reference key="1">
    <citation type="journal article" date="1995" name="J. Biol. Chem.">
        <title>Functional characterization of the higher plant chloroplast chaperonins.</title>
        <authorList>
            <person name="Viitanen P.V."/>
            <person name="Schmidt M."/>
            <person name="Buchner J."/>
            <person name="Suzuki T."/>
            <person name="Vierling E."/>
            <person name="Dickson R.R."/>
            <person name="Lorimer G.H."/>
            <person name="Gatenby A."/>
            <person name="Soll J."/>
        </authorList>
    </citation>
    <scope>NUCLEOTIDE SEQUENCE [MRNA]</scope>
</reference>
<reference key="2">
    <citation type="journal article" date="1987" name="Eur. J. Biochem.">
        <title>Dissociation of the ribulosebisphosphate-carboxylase large-subunit binding protein into dissimilar subunits.</title>
        <authorList>
            <person name="Musgrove J.E."/>
            <person name="Johnson R.A."/>
            <person name="Ellis R.J."/>
        </authorList>
    </citation>
    <scope>PROTEIN SEQUENCE OF 48-67</scope>
    <source>
        <strain>cv. Feltham First</strain>
    </source>
</reference>
<comment type="function">
    <text>This protein binds RuBisCO small and large subunits and is implicated in the assembly of the enzyme oligomer.</text>
</comment>
<comment type="subunit">
    <text>Oligomer of probably six alpha and six beta subunits.</text>
</comment>
<comment type="subcellular location">
    <subcellularLocation>
        <location>Plastid</location>
        <location>Chloroplast</location>
    </subcellularLocation>
</comment>
<comment type="miscellaneous">
    <text>This protein shows ATPase activity.</text>
</comment>
<comment type="similarity">
    <text evidence="3">Belongs to the chaperonin (HSP60) family.</text>
</comment>
<organism>
    <name type="scientific">Pisum sativum</name>
    <name type="common">Garden pea</name>
    <name type="synonym">Lathyrus oleraceus</name>
    <dbReference type="NCBI Taxonomy" id="3888"/>
    <lineage>
        <taxon>Eukaryota</taxon>
        <taxon>Viridiplantae</taxon>
        <taxon>Streptophyta</taxon>
        <taxon>Embryophyta</taxon>
        <taxon>Tracheophyta</taxon>
        <taxon>Spermatophyta</taxon>
        <taxon>Magnoliopsida</taxon>
        <taxon>eudicotyledons</taxon>
        <taxon>Gunneridae</taxon>
        <taxon>Pentapetalae</taxon>
        <taxon>rosids</taxon>
        <taxon>fabids</taxon>
        <taxon>Fabales</taxon>
        <taxon>Fabaceae</taxon>
        <taxon>Papilionoideae</taxon>
        <taxon>50 kb inversion clade</taxon>
        <taxon>NPAAA clade</taxon>
        <taxon>Hologalegina</taxon>
        <taxon>IRL clade</taxon>
        <taxon>Fabeae</taxon>
        <taxon>Pisum</taxon>
    </lineage>
</organism>
<accession>P08926</accession>
<protein>
    <recommendedName>
        <fullName>RuBisCO large subunit-binding protein subunit alpha, chloroplastic</fullName>
    </recommendedName>
    <alternativeName>
        <fullName>60 kDa chaperonin subunit alpha</fullName>
    </alternativeName>
    <alternativeName>
        <fullName>CPN-60 alpha</fullName>
    </alternativeName>
</protein>
<proteinExistence type="evidence at protein level"/>
<sequence length="587" mass="61979">MASTNALSSTSILRSPTNQAQTSLSKKVKQHGRVNFRQKPNRFVVKAAAKDIAFDQHSRSAMQAGIDKLADAVGLTLGPRGRNVVLDEFGSPKVVNDGVTIARAIELPDPMENAGAALIREVASKTNDSAGDGTTTASILAREIIKLGLLNVTSGANPVSIKKGIDKTVAALVEELEKLARPVKGGDDIKAVATISAGNDELIGKMIAEAIDKVGPDGVLSIESSNSFETTVEVEEGMEIDRGYISPQFVTNPEKSIVEFENARVLITDQKISAIKDIIPLLEKTTQLRAPLLIISEDITGEALATLVVNKLRGILNVAAIKAPGFGERRKALLQDIAILTGAEFQASDLGLLVENTTIEQLGLARKVTISKDSTTIIADAASKDELQSRVAQLKKELSETDSIYDSEKLAERIAKLSGGVAVIKVGAATETELEDRKLRIEDAKNATFAAIEEGIVPGGGTALVHLSGYVPAIKEKLEDADERLGADIVQKALVAPAALIAQNAGIEGEVVVEKIKNGEWEVGYNAMTDTYENLVESGVIDPAKVTRCALQNAASVAGMVLTTQAIVVEKPKPKAAVAAAPQGLTI</sequence>
<feature type="transit peptide" description="Chloroplast" evidence="2">
    <location>
        <begin position="1"/>
        <end position="47"/>
    </location>
</feature>
<feature type="chain" id="PRO_0000005020" description="RuBisCO large subunit-binding protein subunit alpha, chloroplastic">
    <location>
        <begin position="48"/>
        <end position="587"/>
    </location>
</feature>
<feature type="region of interest" description="Disordered" evidence="1">
    <location>
        <begin position="1"/>
        <end position="33"/>
    </location>
</feature>
<feature type="compositionally biased region" description="Polar residues" evidence="1">
    <location>
        <begin position="1"/>
        <end position="25"/>
    </location>
</feature>
<name>RUBA_PEA</name>
<evidence type="ECO:0000256" key="1">
    <source>
        <dbReference type="SAM" id="MobiDB-lite"/>
    </source>
</evidence>
<evidence type="ECO:0000269" key="2">
    <source>
    </source>
</evidence>
<evidence type="ECO:0000305" key="3"/>
<dbReference type="EMBL" id="U21105">
    <property type="protein sequence ID" value="AAA87731.1"/>
    <property type="molecule type" value="mRNA"/>
</dbReference>
<dbReference type="PIR" id="S07232">
    <property type="entry name" value="S07232"/>
</dbReference>
<dbReference type="PIR" id="T06518">
    <property type="entry name" value="T06518"/>
</dbReference>
<dbReference type="RefSeq" id="NP_001413989.1">
    <property type="nucleotide sequence ID" value="NM_001427060.1"/>
</dbReference>
<dbReference type="SMR" id="P08926"/>
<dbReference type="EnsemblPlants" id="Psat7g144320.1">
    <property type="protein sequence ID" value="Psat7g144320.1.cds"/>
    <property type="gene ID" value="Psat7g144320"/>
</dbReference>
<dbReference type="GeneID" id="127107501"/>
<dbReference type="Gramene" id="Psat7g144320.1">
    <property type="protein sequence ID" value="Psat7g144320.1.cds"/>
    <property type="gene ID" value="Psat7g144320"/>
</dbReference>
<dbReference type="OrthoDB" id="1733909at2759"/>
<dbReference type="GO" id="GO:0009507">
    <property type="term" value="C:chloroplast"/>
    <property type="evidence" value="ECO:0007669"/>
    <property type="project" value="UniProtKB-SubCell"/>
</dbReference>
<dbReference type="GO" id="GO:0005524">
    <property type="term" value="F:ATP binding"/>
    <property type="evidence" value="ECO:0007669"/>
    <property type="project" value="UniProtKB-KW"/>
</dbReference>
<dbReference type="GO" id="GO:0140662">
    <property type="term" value="F:ATP-dependent protein folding chaperone"/>
    <property type="evidence" value="ECO:0007669"/>
    <property type="project" value="InterPro"/>
</dbReference>
<dbReference type="GO" id="GO:0042026">
    <property type="term" value="P:protein refolding"/>
    <property type="evidence" value="ECO:0007669"/>
    <property type="project" value="InterPro"/>
</dbReference>
<dbReference type="CDD" id="cd03344">
    <property type="entry name" value="GroEL"/>
    <property type="match status" value="1"/>
</dbReference>
<dbReference type="FunFam" id="3.50.7.10:FF:000001">
    <property type="entry name" value="60 kDa chaperonin"/>
    <property type="match status" value="1"/>
</dbReference>
<dbReference type="Gene3D" id="3.50.7.10">
    <property type="entry name" value="GroEL"/>
    <property type="match status" value="1"/>
</dbReference>
<dbReference type="Gene3D" id="1.10.560.10">
    <property type="entry name" value="GroEL-like equatorial domain"/>
    <property type="match status" value="1"/>
</dbReference>
<dbReference type="Gene3D" id="3.30.260.10">
    <property type="entry name" value="TCP-1-like chaperonin intermediate domain"/>
    <property type="match status" value="1"/>
</dbReference>
<dbReference type="HAMAP" id="MF_00600">
    <property type="entry name" value="CH60"/>
    <property type="match status" value="1"/>
</dbReference>
<dbReference type="InterPro" id="IPR018370">
    <property type="entry name" value="Chaperonin_Cpn60_CS"/>
</dbReference>
<dbReference type="InterPro" id="IPR001844">
    <property type="entry name" value="Cpn60/GroEL"/>
</dbReference>
<dbReference type="InterPro" id="IPR002423">
    <property type="entry name" value="Cpn60/GroEL/TCP-1"/>
</dbReference>
<dbReference type="InterPro" id="IPR027409">
    <property type="entry name" value="GroEL-like_apical_dom_sf"/>
</dbReference>
<dbReference type="InterPro" id="IPR027413">
    <property type="entry name" value="GROEL-like_equatorial_sf"/>
</dbReference>
<dbReference type="InterPro" id="IPR027410">
    <property type="entry name" value="TCP-1-like_intermed_sf"/>
</dbReference>
<dbReference type="NCBIfam" id="TIGR02348">
    <property type="entry name" value="GroEL"/>
    <property type="match status" value="1"/>
</dbReference>
<dbReference type="NCBIfam" id="NF000592">
    <property type="entry name" value="PRK00013.1"/>
    <property type="match status" value="1"/>
</dbReference>
<dbReference type="NCBIfam" id="NF009487">
    <property type="entry name" value="PRK12849.1"/>
    <property type="match status" value="1"/>
</dbReference>
<dbReference type="NCBIfam" id="NF009488">
    <property type="entry name" value="PRK12850.1"/>
    <property type="match status" value="1"/>
</dbReference>
<dbReference type="NCBIfam" id="NF009489">
    <property type="entry name" value="PRK12851.1"/>
    <property type="match status" value="1"/>
</dbReference>
<dbReference type="PANTHER" id="PTHR45633">
    <property type="entry name" value="60 KDA HEAT SHOCK PROTEIN, MITOCHONDRIAL"/>
    <property type="match status" value="1"/>
</dbReference>
<dbReference type="Pfam" id="PF00118">
    <property type="entry name" value="Cpn60_TCP1"/>
    <property type="match status" value="1"/>
</dbReference>
<dbReference type="PRINTS" id="PR00298">
    <property type="entry name" value="CHAPERONIN60"/>
</dbReference>
<dbReference type="SUPFAM" id="SSF52029">
    <property type="entry name" value="GroEL apical domain-like"/>
    <property type="match status" value="1"/>
</dbReference>
<dbReference type="SUPFAM" id="SSF48592">
    <property type="entry name" value="GroEL equatorial domain-like"/>
    <property type="match status" value="1"/>
</dbReference>
<dbReference type="SUPFAM" id="SSF54849">
    <property type="entry name" value="GroEL-intermediate domain like"/>
    <property type="match status" value="2"/>
</dbReference>
<dbReference type="PROSITE" id="PS00296">
    <property type="entry name" value="CHAPERONINS_CPN60"/>
    <property type="match status" value="1"/>
</dbReference>